<feature type="chain" id="PRO_0000057420" description="tRNA pseudouridine synthase A">
    <location>
        <begin position="1"/>
        <end position="265"/>
    </location>
</feature>
<feature type="active site" description="Nucleophile" evidence="1">
    <location>
        <position position="58"/>
    </location>
</feature>
<feature type="binding site" evidence="1">
    <location>
        <position position="116"/>
    </location>
    <ligand>
        <name>substrate</name>
    </ligand>
</feature>
<sequence>MDTAQKQRWAITLSYDGSRFYGWQKQADGVPTVQAALETALAQIAGEAVSTTVAGRTDTGVHATAQVVHFDTTAARPQQAWVRGVNAHLPEGIAVLHARQVAPEFHARFDAYGRHYRYLLESAPVRSPLLKNRAGWTHLKLDIGQMRQAAALLVGEQDFSSFRAAECQAKSPVKTIYRADLTQSSGLVRLDLHGNAFLHHMVRNIMGALVYVGSGRLSVEGFAALIQERSRLKAPPTFMPDGLYLTGVDYPEAYGIIRPQIPEWL</sequence>
<keyword id="KW-0413">Isomerase</keyword>
<keyword id="KW-1185">Reference proteome</keyword>
<keyword id="KW-0819">tRNA processing</keyword>
<dbReference type="EC" id="5.4.99.12" evidence="1"/>
<dbReference type="EMBL" id="AE002098">
    <property type="protein sequence ID" value="AAF42357.1"/>
    <property type="molecule type" value="Genomic_DNA"/>
</dbReference>
<dbReference type="PIR" id="A81014">
    <property type="entry name" value="A81014"/>
</dbReference>
<dbReference type="RefSeq" id="NP_275027.1">
    <property type="nucleotide sequence ID" value="NC_003112.2"/>
</dbReference>
<dbReference type="RefSeq" id="WP_002244344.1">
    <property type="nucleotide sequence ID" value="NC_003112.2"/>
</dbReference>
<dbReference type="SMR" id="Q9JXI2"/>
<dbReference type="FunCoup" id="Q9JXI2">
    <property type="interactions" value="437"/>
</dbReference>
<dbReference type="STRING" id="122586.NMB2036"/>
<dbReference type="PaxDb" id="122586-NMB2036"/>
<dbReference type="KEGG" id="nme:NMB2036"/>
<dbReference type="PATRIC" id="fig|122586.8.peg.2602"/>
<dbReference type="HOGENOM" id="CLU_014673_0_2_4"/>
<dbReference type="InParanoid" id="Q9JXI2"/>
<dbReference type="OrthoDB" id="9811823at2"/>
<dbReference type="Proteomes" id="UP000000425">
    <property type="component" value="Chromosome"/>
</dbReference>
<dbReference type="GO" id="GO:0009982">
    <property type="term" value="F:pseudouridine synthase activity"/>
    <property type="evidence" value="ECO:0000318"/>
    <property type="project" value="GO_Central"/>
</dbReference>
<dbReference type="GO" id="GO:0003723">
    <property type="term" value="F:RNA binding"/>
    <property type="evidence" value="ECO:0007669"/>
    <property type="project" value="InterPro"/>
</dbReference>
<dbReference type="GO" id="GO:0160147">
    <property type="term" value="F:tRNA pseudouridine(38-40) synthase activity"/>
    <property type="evidence" value="ECO:0007669"/>
    <property type="project" value="UniProtKB-EC"/>
</dbReference>
<dbReference type="GO" id="GO:0031119">
    <property type="term" value="P:tRNA pseudouridine synthesis"/>
    <property type="evidence" value="ECO:0000318"/>
    <property type="project" value="GO_Central"/>
</dbReference>
<dbReference type="CDD" id="cd02570">
    <property type="entry name" value="PseudoU_synth_EcTruA"/>
    <property type="match status" value="1"/>
</dbReference>
<dbReference type="FunFam" id="3.30.70.580:FF:000001">
    <property type="entry name" value="tRNA pseudouridine synthase A"/>
    <property type="match status" value="1"/>
</dbReference>
<dbReference type="FunFam" id="3.30.70.660:FF:000016">
    <property type="entry name" value="tRNA pseudouridine synthase A"/>
    <property type="match status" value="1"/>
</dbReference>
<dbReference type="Gene3D" id="3.30.70.660">
    <property type="entry name" value="Pseudouridine synthase I, catalytic domain, C-terminal subdomain"/>
    <property type="match status" value="1"/>
</dbReference>
<dbReference type="Gene3D" id="3.30.70.580">
    <property type="entry name" value="Pseudouridine synthase I, catalytic domain, N-terminal subdomain"/>
    <property type="match status" value="1"/>
</dbReference>
<dbReference type="HAMAP" id="MF_00171">
    <property type="entry name" value="TruA"/>
    <property type="match status" value="1"/>
</dbReference>
<dbReference type="InterPro" id="IPR020103">
    <property type="entry name" value="PsdUridine_synth_cat_dom_sf"/>
</dbReference>
<dbReference type="InterPro" id="IPR001406">
    <property type="entry name" value="PsdUridine_synth_TruA"/>
</dbReference>
<dbReference type="InterPro" id="IPR020097">
    <property type="entry name" value="PsdUridine_synth_TruA_a/b_dom"/>
</dbReference>
<dbReference type="InterPro" id="IPR020095">
    <property type="entry name" value="PsdUridine_synth_TruA_C"/>
</dbReference>
<dbReference type="InterPro" id="IPR020094">
    <property type="entry name" value="TruA/RsuA/RluB/E/F_N"/>
</dbReference>
<dbReference type="NCBIfam" id="TIGR00071">
    <property type="entry name" value="hisT_truA"/>
    <property type="match status" value="1"/>
</dbReference>
<dbReference type="PANTHER" id="PTHR11142">
    <property type="entry name" value="PSEUDOURIDYLATE SYNTHASE"/>
    <property type="match status" value="1"/>
</dbReference>
<dbReference type="PANTHER" id="PTHR11142:SF0">
    <property type="entry name" value="TRNA PSEUDOURIDINE SYNTHASE-LIKE 1"/>
    <property type="match status" value="1"/>
</dbReference>
<dbReference type="Pfam" id="PF01416">
    <property type="entry name" value="PseudoU_synth_1"/>
    <property type="match status" value="2"/>
</dbReference>
<dbReference type="PIRSF" id="PIRSF001430">
    <property type="entry name" value="tRNA_psdUrid_synth"/>
    <property type="match status" value="1"/>
</dbReference>
<dbReference type="SUPFAM" id="SSF55120">
    <property type="entry name" value="Pseudouridine synthase"/>
    <property type="match status" value="1"/>
</dbReference>
<comment type="function">
    <text evidence="1">Formation of pseudouridine at positions 38, 39 and 40 in the anticodon stem and loop of transfer RNAs.</text>
</comment>
<comment type="catalytic activity">
    <reaction evidence="1">
        <text>uridine(38/39/40) in tRNA = pseudouridine(38/39/40) in tRNA</text>
        <dbReference type="Rhea" id="RHEA:22376"/>
        <dbReference type="Rhea" id="RHEA-COMP:10085"/>
        <dbReference type="Rhea" id="RHEA-COMP:10087"/>
        <dbReference type="ChEBI" id="CHEBI:65314"/>
        <dbReference type="ChEBI" id="CHEBI:65315"/>
        <dbReference type="EC" id="5.4.99.12"/>
    </reaction>
</comment>
<comment type="subunit">
    <text evidence="1">Homodimer.</text>
</comment>
<comment type="similarity">
    <text evidence="1">Belongs to the tRNA pseudouridine synthase TruA family.</text>
</comment>
<reference key="1">
    <citation type="journal article" date="2000" name="Science">
        <title>Complete genome sequence of Neisseria meningitidis serogroup B strain MC58.</title>
        <authorList>
            <person name="Tettelin H."/>
            <person name="Saunders N.J."/>
            <person name="Heidelberg J.F."/>
            <person name="Jeffries A.C."/>
            <person name="Nelson K.E."/>
            <person name="Eisen J.A."/>
            <person name="Ketchum K.A."/>
            <person name="Hood D.W."/>
            <person name="Peden J.F."/>
            <person name="Dodson R.J."/>
            <person name="Nelson W.C."/>
            <person name="Gwinn M.L."/>
            <person name="DeBoy R.T."/>
            <person name="Peterson J.D."/>
            <person name="Hickey E.K."/>
            <person name="Haft D.H."/>
            <person name="Salzberg S.L."/>
            <person name="White O."/>
            <person name="Fleischmann R.D."/>
            <person name="Dougherty B.A."/>
            <person name="Mason T.M."/>
            <person name="Ciecko A."/>
            <person name="Parksey D.S."/>
            <person name="Blair E."/>
            <person name="Cittone H."/>
            <person name="Clark E.B."/>
            <person name="Cotton M.D."/>
            <person name="Utterback T.R."/>
            <person name="Khouri H.M."/>
            <person name="Qin H."/>
            <person name="Vamathevan J.J."/>
            <person name="Gill J."/>
            <person name="Scarlato V."/>
            <person name="Masignani V."/>
            <person name="Pizza M."/>
            <person name="Grandi G."/>
            <person name="Sun L."/>
            <person name="Smith H.O."/>
            <person name="Fraser C.M."/>
            <person name="Moxon E.R."/>
            <person name="Rappuoli R."/>
            <person name="Venter J.C."/>
        </authorList>
    </citation>
    <scope>NUCLEOTIDE SEQUENCE [LARGE SCALE GENOMIC DNA]</scope>
    <source>
        <strain>ATCC BAA-335 / MC58</strain>
    </source>
</reference>
<accession>Q9JXI2</accession>
<organism>
    <name type="scientific">Neisseria meningitidis serogroup B (strain ATCC BAA-335 / MC58)</name>
    <dbReference type="NCBI Taxonomy" id="122586"/>
    <lineage>
        <taxon>Bacteria</taxon>
        <taxon>Pseudomonadati</taxon>
        <taxon>Pseudomonadota</taxon>
        <taxon>Betaproteobacteria</taxon>
        <taxon>Neisseriales</taxon>
        <taxon>Neisseriaceae</taxon>
        <taxon>Neisseria</taxon>
    </lineage>
</organism>
<gene>
    <name evidence="1" type="primary">truA</name>
    <name type="ordered locus">NMB2036</name>
</gene>
<protein>
    <recommendedName>
        <fullName evidence="1">tRNA pseudouridine synthase A</fullName>
        <ecNumber evidence="1">5.4.99.12</ecNumber>
    </recommendedName>
    <alternativeName>
        <fullName evidence="1">tRNA pseudouridine(38-40) synthase</fullName>
    </alternativeName>
    <alternativeName>
        <fullName evidence="1">tRNA pseudouridylate synthase I</fullName>
    </alternativeName>
    <alternativeName>
        <fullName evidence="1">tRNA-uridine isomerase I</fullName>
    </alternativeName>
</protein>
<evidence type="ECO:0000255" key="1">
    <source>
        <dbReference type="HAMAP-Rule" id="MF_00171"/>
    </source>
</evidence>
<proteinExistence type="inferred from homology"/>
<name>TRUA_NEIMB</name>